<name>RECF_FRATO</name>
<reference key="1">
    <citation type="journal article" date="2006" name="J. Bacteriol.">
        <title>Chromosome rearrangement and diversification of Francisella tularensis revealed by the type B (OSU18) genome sequence.</title>
        <authorList>
            <person name="Petrosino J.F."/>
            <person name="Xiang Q."/>
            <person name="Karpathy S.E."/>
            <person name="Jiang H."/>
            <person name="Yerrapragada S."/>
            <person name="Liu Y."/>
            <person name="Gioia J."/>
            <person name="Hemphill L."/>
            <person name="Gonzalez A."/>
            <person name="Raghavan T.M."/>
            <person name="Uzman A."/>
            <person name="Fox G.E."/>
            <person name="Highlander S."/>
            <person name="Reichard M."/>
            <person name="Morton R.J."/>
            <person name="Clinkenbeard K.D."/>
            <person name="Weinstock G.M."/>
        </authorList>
    </citation>
    <scope>NUCLEOTIDE SEQUENCE [LARGE SCALE GENOMIC DNA]</scope>
    <source>
        <strain>OSU18</strain>
    </source>
</reference>
<evidence type="ECO:0000255" key="1">
    <source>
        <dbReference type="HAMAP-Rule" id="MF_00365"/>
    </source>
</evidence>
<feature type="chain" id="PRO_1000205491" description="DNA replication and repair protein RecF">
    <location>
        <begin position="1"/>
        <end position="349"/>
    </location>
</feature>
<feature type="binding site" evidence="1">
    <location>
        <begin position="30"/>
        <end position="37"/>
    </location>
    <ligand>
        <name>ATP</name>
        <dbReference type="ChEBI" id="CHEBI:30616"/>
    </ligand>
</feature>
<keyword id="KW-0067">ATP-binding</keyword>
<keyword id="KW-0963">Cytoplasm</keyword>
<keyword id="KW-0227">DNA damage</keyword>
<keyword id="KW-0234">DNA repair</keyword>
<keyword id="KW-0235">DNA replication</keyword>
<keyword id="KW-0238">DNA-binding</keyword>
<keyword id="KW-0547">Nucleotide-binding</keyword>
<keyword id="KW-0742">SOS response</keyword>
<organism>
    <name type="scientific">Francisella tularensis subsp. holarctica (strain OSU18)</name>
    <dbReference type="NCBI Taxonomy" id="393011"/>
    <lineage>
        <taxon>Bacteria</taxon>
        <taxon>Pseudomonadati</taxon>
        <taxon>Pseudomonadota</taxon>
        <taxon>Gammaproteobacteria</taxon>
        <taxon>Thiotrichales</taxon>
        <taxon>Francisellaceae</taxon>
        <taxon>Francisella</taxon>
    </lineage>
</organism>
<proteinExistence type="inferred from homology"/>
<comment type="function">
    <text evidence="1">The RecF protein is involved in DNA metabolism; it is required for DNA replication and normal SOS inducibility. RecF binds preferentially to single-stranded, linear DNA. It also seems to bind ATP.</text>
</comment>
<comment type="subcellular location">
    <subcellularLocation>
        <location evidence="1">Cytoplasm</location>
    </subcellularLocation>
</comment>
<comment type="similarity">
    <text evidence="1">Belongs to the RecF family.</text>
</comment>
<accession>Q0BL82</accession>
<gene>
    <name evidence="1" type="primary">recF</name>
    <name type="ordered locus">FTH_1315</name>
</gene>
<sequence>MYISNLRLQNFRNIPAKSFDFKNSINFIVGKNGSGKTSILESIYFLSHSRSFRSSQLNRIINHNADEFIIYTKAYNPDEITISLSRKKNSNNISKLNLEIQKNHTEITRNLPIQLINPESFNIINSGAQQRCKVIDWGAFYLDKTFLKIWQQTKFLVKQRNSALKQNYPYSYILSIDKKLCEFAEILDYKRQAYFTKLKPKIYEILSHFNPNLQLDIDYFRGWNLHKSLAQVLEESFNYDNKYKVTNHGPHKADIVLSVSHKPIQDIFSRGQQKLLICALKLAQGEIHNSENDNKCIYLIDDITSELDSIHTLTLFNYLKQLKSQVFITTTEKNKINEFIDTNSYILEI</sequence>
<protein>
    <recommendedName>
        <fullName evidence="1">DNA replication and repair protein RecF</fullName>
    </recommendedName>
</protein>
<dbReference type="EMBL" id="CP000437">
    <property type="protein sequence ID" value="ABI83152.1"/>
    <property type="molecule type" value="Genomic_DNA"/>
</dbReference>
<dbReference type="RefSeq" id="WP_003016570.1">
    <property type="nucleotide sequence ID" value="NC_017463.1"/>
</dbReference>
<dbReference type="SMR" id="Q0BL82"/>
<dbReference type="KEGG" id="fth:FTH_1315"/>
<dbReference type="GO" id="GO:0005737">
    <property type="term" value="C:cytoplasm"/>
    <property type="evidence" value="ECO:0007669"/>
    <property type="project" value="UniProtKB-SubCell"/>
</dbReference>
<dbReference type="GO" id="GO:0005524">
    <property type="term" value="F:ATP binding"/>
    <property type="evidence" value="ECO:0007669"/>
    <property type="project" value="UniProtKB-UniRule"/>
</dbReference>
<dbReference type="GO" id="GO:0003697">
    <property type="term" value="F:single-stranded DNA binding"/>
    <property type="evidence" value="ECO:0007669"/>
    <property type="project" value="UniProtKB-UniRule"/>
</dbReference>
<dbReference type="GO" id="GO:0006260">
    <property type="term" value="P:DNA replication"/>
    <property type="evidence" value="ECO:0007669"/>
    <property type="project" value="UniProtKB-UniRule"/>
</dbReference>
<dbReference type="GO" id="GO:0000731">
    <property type="term" value="P:DNA synthesis involved in DNA repair"/>
    <property type="evidence" value="ECO:0007669"/>
    <property type="project" value="TreeGrafter"/>
</dbReference>
<dbReference type="GO" id="GO:0006302">
    <property type="term" value="P:double-strand break repair"/>
    <property type="evidence" value="ECO:0007669"/>
    <property type="project" value="TreeGrafter"/>
</dbReference>
<dbReference type="GO" id="GO:0009432">
    <property type="term" value="P:SOS response"/>
    <property type="evidence" value="ECO:0007669"/>
    <property type="project" value="UniProtKB-UniRule"/>
</dbReference>
<dbReference type="Gene3D" id="3.40.50.300">
    <property type="entry name" value="P-loop containing nucleotide triphosphate hydrolases"/>
    <property type="match status" value="1"/>
</dbReference>
<dbReference type="Gene3D" id="1.20.1050.90">
    <property type="entry name" value="RecF/RecN/SMC, N-terminal domain"/>
    <property type="match status" value="1"/>
</dbReference>
<dbReference type="HAMAP" id="MF_00365">
    <property type="entry name" value="RecF"/>
    <property type="match status" value="1"/>
</dbReference>
<dbReference type="InterPro" id="IPR001238">
    <property type="entry name" value="DNA-binding_RecF"/>
</dbReference>
<dbReference type="InterPro" id="IPR018078">
    <property type="entry name" value="DNA-binding_RecF_CS"/>
</dbReference>
<dbReference type="InterPro" id="IPR027417">
    <property type="entry name" value="P-loop_NTPase"/>
</dbReference>
<dbReference type="InterPro" id="IPR003395">
    <property type="entry name" value="RecF/RecN/SMC_N"/>
</dbReference>
<dbReference type="InterPro" id="IPR042174">
    <property type="entry name" value="RecF_2"/>
</dbReference>
<dbReference type="NCBIfam" id="TIGR00611">
    <property type="entry name" value="recf"/>
    <property type="match status" value="1"/>
</dbReference>
<dbReference type="PANTHER" id="PTHR32182">
    <property type="entry name" value="DNA REPLICATION AND REPAIR PROTEIN RECF"/>
    <property type="match status" value="1"/>
</dbReference>
<dbReference type="PANTHER" id="PTHR32182:SF0">
    <property type="entry name" value="DNA REPLICATION AND REPAIR PROTEIN RECF"/>
    <property type="match status" value="1"/>
</dbReference>
<dbReference type="Pfam" id="PF02463">
    <property type="entry name" value="SMC_N"/>
    <property type="match status" value="1"/>
</dbReference>
<dbReference type="SUPFAM" id="SSF52540">
    <property type="entry name" value="P-loop containing nucleoside triphosphate hydrolases"/>
    <property type="match status" value="1"/>
</dbReference>
<dbReference type="PROSITE" id="PS00618">
    <property type="entry name" value="RECF_2"/>
    <property type="match status" value="1"/>
</dbReference>